<evidence type="ECO:0000250" key="1"/>
<evidence type="ECO:0000305" key="2"/>
<feature type="chain" id="PRO_1000063286" description="ATP phosphoribosyltransferase">
    <location>
        <begin position="1"/>
        <end position="230"/>
    </location>
</feature>
<proteinExistence type="inferred from homology"/>
<accession>Q11LA2</accession>
<organism>
    <name type="scientific">Chelativorans sp. (strain BNC1)</name>
    <dbReference type="NCBI Taxonomy" id="266779"/>
    <lineage>
        <taxon>Bacteria</taxon>
        <taxon>Pseudomonadati</taxon>
        <taxon>Pseudomonadota</taxon>
        <taxon>Alphaproteobacteria</taxon>
        <taxon>Hyphomicrobiales</taxon>
        <taxon>Phyllobacteriaceae</taxon>
        <taxon>Chelativorans</taxon>
    </lineage>
</organism>
<reference key="1">
    <citation type="submission" date="2006-06" db="EMBL/GenBank/DDBJ databases">
        <title>Complete sequence of chromosome of Mesorhizobium sp. BNC1.</title>
        <authorList>
            <consortium name="US DOE Joint Genome Institute"/>
            <person name="Copeland A."/>
            <person name="Lucas S."/>
            <person name="Lapidus A."/>
            <person name="Barry K."/>
            <person name="Detter J.C."/>
            <person name="Glavina del Rio T."/>
            <person name="Hammon N."/>
            <person name="Israni S."/>
            <person name="Dalin E."/>
            <person name="Tice H."/>
            <person name="Pitluck S."/>
            <person name="Chertkov O."/>
            <person name="Brettin T."/>
            <person name="Bruce D."/>
            <person name="Han C."/>
            <person name="Tapia R."/>
            <person name="Gilna P."/>
            <person name="Schmutz J."/>
            <person name="Larimer F."/>
            <person name="Land M."/>
            <person name="Hauser L."/>
            <person name="Kyrpides N."/>
            <person name="Mikhailova N."/>
            <person name="Richardson P."/>
        </authorList>
    </citation>
    <scope>NUCLEOTIDE SEQUENCE [LARGE SCALE GENOMIC DNA]</scope>
    <source>
        <strain>BNC1</strain>
    </source>
</reference>
<keyword id="KW-0028">Amino-acid biosynthesis</keyword>
<keyword id="KW-0067">ATP-binding</keyword>
<keyword id="KW-0963">Cytoplasm</keyword>
<keyword id="KW-0328">Glycosyltransferase</keyword>
<keyword id="KW-0368">Histidine biosynthesis</keyword>
<keyword id="KW-0547">Nucleotide-binding</keyword>
<keyword id="KW-0808">Transferase</keyword>
<dbReference type="EC" id="2.4.2.17"/>
<dbReference type="EMBL" id="CP000390">
    <property type="protein sequence ID" value="ABG61823.1"/>
    <property type="molecule type" value="Genomic_DNA"/>
</dbReference>
<dbReference type="SMR" id="Q11LA2"/>
<dbReference type="STRING" id="266779.Meso_0419"/>
<dbReference type="KEGG" id="mes:Meso_0419"/>
<dbReference type="eggNOG" id="COG0040">
    <property type="taxonomic scope" value="Bacteria"/>
</dbReference>
<dbReference type="HOGENOM" id="CLU_038115_0_1_5"/>
<dbReference type="OrthoDB" id="9806435at2"/>
<dbReference type="UniPathway" id="UPA00031">
    <property type="reaction ID" value="UER00006"/>
</dbReference>
<dbReference type="GO" id="GO:0005737">
    <property type="term" value="C:cytoplasm"/>
    <property type="evidence" value="ECO:0007669"/>
    <property type="project" value="UniProtKB-SubCell"/>
</dbReference>
<dbReference type="GO" id="GO:0005524">
    <property type="term" value="F:ATP binding"/>
    <property type="evidence" value="ECO:0007669"/>
    <property type="project" value="UniProtKB-KW"/>
</dbReference>
<dbReference type="GO" id="GO:0003879">
    <property type="term" value="F:ATP phosphoribosyltransferase activity"/>
    <property type="evidence" value="ECO:0007669"/>
    <property type="project" value="UniProtKB-EC"/>
</dbReference>
<dbReference type="GO" id="GO:0000105">
    <property type="term" value="P:L-histidine biosynthetic process"/>
    <property type="evidence" value="ECO:0007669"/>
    <property type="project" value="UniProtKB-UniPathway"/>
</dbReference>
<dbReference type="CDD" id="cd13593">
    <property type="entry name" value="PBP2_HisGL3"/>
    <property type="match status" value="1"/>
</dbReference>
<dbReference type="Gene3D" id="3.40.190.10">
    <property type="entry name" value="Periplasmic binding protein-like II"/>
    <property type="match status" value="2"/>
</dbReference>
<dbReference type="InterPro" id="IPR013820">
    <property type="entry name" value="ATP_PRibTrfase_cat"/>
</dbReference>
<dbReference type="InterPro" id="IPR018198">
    <property type="entry name" value="ATP_PRibTrfase_CS"/>
</dbReference>
<dbReference type="InterPro" id="IPR001348">
    <property type="entry name" value="ATP_PRibTrfase_HisG"/>
</dbReference>
<dbReference type="NCBIfam" id="TIGR00070">
    <property type="entry name" value="hisG"/>
    <property type="match status" value="1"/>
</dbReference>
<dbReference type="PANTHER" id="PTHR21403:SF8">
    <property type="entry name" value="ATP PHOSPHORIBOSYLTRANSFERASE"/>
    <property type="match status" value="1"/>
</dbReference>
<dbReference type="PANTHER" id="PTHR21403">
    <property type="entry name" value="ATP PHOSPHORIBOSYLTRANSFERASE ATP-PRTASE"/>
    <property type="match status" value="1"/>
</dbReference>
<dbReference type="Pfam" id="PF01634">
    <property type="entry name" value="HisG"/>
    <property type="match status" value="1"/>
</dbReference>
<dbReference type="SUPFAM" id="SSF53850">
    <property type="entry name" value="Periplasmic binding protein-like II"/>
    <property type="match status" value="1"/>
</dbReference>
<dbReference type="PROSITE" id="PS01316">
    <property type="entry name" value="ATP_P_PHORIBOSYLTR"/>
    <property type="match status" value="1"/>
</dbReference>
<sequence length="230" mass="25398">MTVTLALPSKGRLKDATVELLREAGYPIRLPENERRYRAGIDGLDGLEVTFLSASEIARELDRGSIDLGVTGEDLVRETIPDWESRVEIAARLGFGHADVVVAVPEIWFDVSTMADLDDVAADFRHRHSRRLRIATKYWRLTQQFFSQKHGIQVYRIVESLGATEGAPAAGSADIIVDITSTGSTLKANHLKVLDDGVILRSQACLVVAKKKRPAEDARLIAELAKAVRR</sequence>
<protein>
    <recommendedName>
        <fullName>ATP phosphoribosyltransferase</fullName>
        <shortName>ATP-PRT</shortName>
        <shortName>ATP-PRTase</shortName>
        <ecNumber>2.4.2.17</ecNumber>
    </recommendedName>
</protein>
<comment type="function">
    <text evidence="1">Catalyzes the condensation of ATP and 5-phosphoribose 1-diphosphate to form N'-(5'-phosphoribosyl)-ATP (PR-ATP). Has a crucial role in the pathway because the rate of histidine biosynthesis seems to be controlled primarily by regulation of HisG enzymatic activity (By similarity).</text>
</comment>
<comment type="catalytic activity">
    <reaction>
        <text>1-(5-phospho-beta-D-ribosyl)-ATP + diphosphate = 5-phospho-alpha-D-ribose 1-diphosphate + ATP</text>
        <dbReference type="Rhea" id="RHEA:18473"/>
        <dbReference type="ChEBI" id="CHEBI:30616"/>
        <dbReference type="ChEBI" id="CHEBI:33019"/>
        <dbReference type="ChEBI" id="CHEBI:58017"/>
        <dbReference type="ChEBI" id="CHEBI:73183"/>
        <dbReference type="EC" id="2.4.2.17"/>
    </reaction>
</comment>
<comment type="pathway">
    <text>Amino-acid biosynthesis; L-histidine biosynthesis; L-histidine from 5-phospho-alpha-D-ribose 1-diphosphate: step 1/9.</text>
</comment>
<comment type="subunit">
    <text evidence="1">Heteromultimer composed of HisG and HisZ subunits.</text>
</comment>
<comment type="subcellular location">
    <subcellularLocation>
        <location evidence="1">Cytoplasm</location>
    </subcellularLocation>
</comment>
<comment type="domain">
    <text>Lacks the C-terminal regulatory region which is replaced by HisZ.</text>
</comment>
<comment type="similarity">
    <text evidence="2">Belongs to the ATP phosphoribosyltransferase family. Short subfamily.</text>
</comment>
<gene>
    <name type="primary">hisG</name>
    <name type="ordered locus">Meso_0419</name>
</gene>
<name>HIS1_CHESB</name>